<feature type="signal peptide" description="Tat-type signal" evidence="2 4">
    <location>
        <begin position="1"/>
        <end position="26"/>
    </location>
</feature>
<feature type="chain" id="PRO_0000008844" description="Hdr-like menaquinol oxidoreductase iron-sulfur subunit 1">
    <location>
        <begin position="27"/>
        <end position="269"/>
    </location>
</feature>
<feature type="domain" description="4Fe-4S ferredoxin-type" evidence="3">
    <location>
        <begin position="141"/>
        <end position="170"/>
    </location>
</feature>
<feature type="binding site" evidence="1">
    <location>
        <position position="52"/>
    </location>
    <ligand>
        <name>[4Fe-4S] cluster</name>
        <dbReference type="ChEBI" id="CHEBI:49883"/>
        <label>1</label>
    </ligand>
</feature>
<feature type="binding site" evidence="1">
    <location>
        <position position="55"/>
    </location>
    <ligand>
        <name>[4Fe-4S] cluster</name>
        <dbReference type="ChEBI" id="CHEBI:49883"/>
        <label>1</label>
    </ligand>
</feature>
<feature type="binding site" evidence="1">
    <location>
        <position position="72"/>
    </location>
    <ligand>
        <name>[4Fe-4S] cluster</name>
        <dbReference type="ChEBI" id="CHEBI:49883"/>
        <label>1</label>
    </ligand>
</feature>
<feature type="binding site" evidence="1">
    <location>
        <position position="76"/>
    </location>
    <ligand>
        <name>[4Fe-4S] cluster</name>
        <dbReference type="ChEBI" id="CHEBI:49883"/>
        <label>2</label>
    </ligand>
</feature>
<feature type="binding site" evidence="1">
    <location>
        <position position="118"/>
    </location>
    <ligand>
        <name>[4Fe-4S] cluster</name>
        <dbReference type="ChEBI" id="CHEBI:49883"/>
        <label>3</label>
    </ligand>
</feature>
<feature type="binding site" evidence="1">
    <location>
        <position position="121"/>
    </location>
    <ligand>
        <name>[4Fe-4S] cluster</name>
        <dbReference type="ChEBI" id="CHEBI:49883"/>
        <label>3</label>
    </ligand>
</feature>
<feature type="binding site" evidence="1">
    <location>
        <position position="126"/>
    </location>
    <ligand>
        <name>[4Fe-4S] cluster</name>
        <dbReference type="ChEBI" id="CHEBI:49883"/>
        <label>3</label>
    </ligand>
</feature>
<feature type="binding site" evidence="1">
    <location>
        <position position="130"/>
    </location>
    <ligand>
        <name>[4Fe-4S] cluster</name>
        <dbReference type="ChEBI" id="CHEBI:49883"/>
        <label>4</label>
    </ligand>
</feature>
<feature type="binding site" evidence="1">
    <location>
        <position position="150"/>
    </location>
    <ligand>
        <name>[4Fe-4S] cluster</name>
        <dbReference type="ChEBI" id="CHEBI:49883"/>
        <label>4</label>
    </ligand>
</feature>
<feature type="binding site" evidence="1">
    <location>
        <position position="153"/>
    </location>
    <ligand>
        <name>[4Fe-4S] cluster</name>
        <dbReference type="ChEBI" id="CHEBI:49883"/>
        <label>4</label>
    </ligand>
</feature>
<feature type="binding site" evidence="1">
    <location>
        <position position="156"/>
    </location>
    <ligand>
        <name>[4Fe-4S] cluster</name>
        <dbReference type="ChEBI" id="CHEBI:49883"/>
        <label>4</label>
    </ligand>
</feature>
<feature type="binding site" evidence="1">
    <location>
        <position position="160"/>
    </location>
    <ligand>
        <name>[4Fe-4S] cluster</name>
        <dbReference type="ChEBI" id="CHEBI:49883"/>
        <label>3</label>
    </ligand>
</feature>
<feature type="binding site" evidence="1">
    <location>
        <position position="194"/>
    </location>
    <ligand>
        <name>[4Fe-4S] cluster</name>
        <dbReference type="ChEBI" id="CHEBI:49883"/>
        <label>2</label>
    </ligand>
</feature>
<feature type="binding site" evidence="1">
    <location>
        <position position="197"/>
    </location>
    <ligand>
        <name>[4Fe-4S] cluster</name>
        <dbReference type="ChEBI" id="CHEBI:49883"/>
        <label>2</label>
    </ligand>
</feature>
<feature type="binding site" evidence="1">
    <location>
        <position position="215"/>
    </location>
    <ligand>
        <name>[4Fe-4S] cluster</name>
        <dbReference type="ChEBI" id="CHEBI:49883"/>
        <label>2</label>
    </ligand>
</feature>
<feature type="binding site" evidence="1">
    <location>
        <position position="219"/>
    </location>
    <ligand>
        <name>[4Fe-4S] cluster</name>
        <dbReference type="ChEBI" id="CHEBI:49883"/>
        <label>1</label>
    </ligand>
</feature>
<feature type="sequence conflict" description="In Ref. 2; AA sequence." evidence="5" ref="2">
    <original>R</original>
    <variation>V</variation>
    <location>
        <position position="38"/>
    </location>
</feature>
<name>HMEA_ARCFU</name>
<reference key="1">
    <citation type="journal article" date="1997" name="Nature">
        <title>The complete genome sequence of the hyperthermophilic, sulphate-reducing archaeon Archaeoglobus fulgidus.</title>
        <authorList>
            <person name="Klenk H.-P."/>
            <person name="Clayton R.A."/>
            <person name="Tomb J.-F."/>
            <person name="White O."/>
            <person name="Nelson K.E."/>
            <person name="Ketchum K.A."/>
            <person name="Dodson R.J."/>
            <person name="Gwinn M.L."/>
            <person name="Hickey E.K."/>
            <person name="Peterson J.D."/>
            <person name="Richardson D.L."/>
            <person name="Kerlavage A.R."/>
            <person name="Graham D.E."/>
            <person name="Kyrpides N.C."/>
            <person name="Fleischmann R.D."/>
            <person name="Quackenbush J."/>
            <person name="Lee N.H."/>
            <person name="Sutton G.G."/>
            <person name="Gill S.R."/>
            <person name="Kirkness E.F."/>
            <person name="Dougherty B.A."/>
            <person name="McKenney K."/>
            <person name="Adams M.D."/>
            <person name="Loftus B.J."/>
            <person name="Peterson S.N."/>
            <person name="Reich C.I."/>
            <person name="McNeil L.K."/>
            <person name="Badger J.H."/>
            <person name="Glodek A."/>
            <person name="Zhou L."/>
            <person name="Overbeek R."/>
            <person name="Gocayne J.D."/>
            <person name="Weidman J.F."/>
            <person name="McDonald L.A."/>
            <person name="Utterback T.R."/>
            <person name="Cotton M.D."/>
            <person name="Spriggs T."/>
            <person name="Artiach P."/>
            <person name="Kaine B.P."/>
            <person name="Sykes S.M."/>
            <person name="Sadow P.W."/>
            <person name="D'Andrea K.P."/>
            <person name="Bowman C."/>
            <person name="Fujii C."/>
            <person name="Garland S.A."/>
            <person name="Mason T.M."/>
            <person name="Olsen G.J."/>
            <person name="Fraser C.M."/>
            <person name="Smith H.O."/>
            <person name="Woese C.R."/>
            <person name="Venter J.C."/>
        </authorList>
    </citation>
    <scope>NUCLEOTIDE SEQUENCE [LARGE SCALE GENOMIC DNA]</scope>
    <source>
        <strain>ATCC 49558 / DSM 4304 / JCM 9628 / NBRC 100126 / VC-16</strain>
    </source>
</reference>
<reference key="2">
    <citation type="journal article" date="2002" name="Eur. J. Biochem.">
        <title>Purification and characterization of a membrane-bound enzyme complex from the sulfate-reducing archaeon Archaeoglobus fulgidus related to heterodisulfide reductase from methanogenic archaea.</title>
        <authorList>
            <person name="Mander G.J."/>
            <person name="Duin E.C."/>
            <person name="Linder D."/>
            <person name="Stetter K.O."/>
            <person name="Hedderich R."/>
        </authorList>
    </citation>
    <scope>PROTEIN SEQUENCE OF 27-40</scope>
    <scope>EPR SPECTROSCOPY</scope>
    <scope>REDOX POTENTIOMETRY OF HEMES</scope>
    <source>
        <strain>ATCC 49558 / DSM 4304 / JCM 9628 / NBRC 100126 / VC-16</strain>
    </source>
</reference>
<evidence type="ECO:0000250" key="1"/>
<evidence type="ECO:0000255" key="2">
    <source>
        <dbReference type="PROSITE-ProRule" id="PRU00648"/>
    </source>
</evidence>
<evidence type="ECO:0000255" key="3">
    <source>
        <dbReference type="PROSITE-ProRule" id="PRU00711"/>
    </source>
</evidence>
<evidence type="ECO:0000269" key="4">
    <source>
    </source>
</evidence>
<evidence type="ECO:0000305" key="5"/>
<sequence>MMSRRKFLLLTGAAAAGAILTPQISAKTQFIESPEEVREKRRWAMAVDVERCTQCMEELIAKTGDEKIKPPCVVACDKENNVPEFEEERFDPQWMRIAKLKLDKPEVNPKEYYIPLLCNHCEHPPCVQVCLTKASFKRPDGIVEIDMHRCIGCRYCMIACPYGARCFNFIDPREGLKEVNPNVQMRTEGVVEKCTFCVHRIDEAVKKGEEPIPACVEACHKYGKGALVFGNIKDPNSEISKILRENIVVQLRANLGTDPHVFYAKLGGE</sequence>
<protein>
    <recommendedName>
        <fullName>Hdr-like menaquinol oxidoreductase iron-sulfur subunit 1</fullName>
        <shortName>Hme subunit A</shortName>
    </recommendedName>
</protein>
<gene>
    <name type="primary">hmeA</name>
    <name type="ordered locus">AF_0499</name>
</gene>
<proteinExistence type="evidence at protein level"/>
<keyword id="KW-0004">4Fe-4S</keyword>
<keyword id="KW-1003">Cell membrane</keyword>
<keyword id="KW-0903">Direct protein sequencing</keyword>
<keyword id="KW-0249">Electron transport</keyword>
<keyword id="KW-0408">Iron</keyword>
<keyword id="KW-0411">Iron-sulfur</keyword>
<keyword id="KW-0472">Membrane</keyword>
<keyword id="KW-0479">Metal-binding</keyword>
<keyword id="KW-0560">Oxidoreductase</keyword>
<keyword id="KW-1185">Reference proteome</keyword>
<keyword id="KW-0732">Signal</keyword>
<keyword id="KW-0813">Transport</keyword>
<comment type="function">
    <text>Has menaquinol-oxidizing activity. HmeA, HmeB and HmeE subunits may together catalyze electron transfer from menaquinol to cytochrome c.</text>
</comment>
<comment type="cofactor">
    <cofactor evidence="1">
        <name>[4Fe-4S] cluster</name>
        <dbReference type="ChEBI" id="CHEBI:49883"/>
    </cofactor>
    <text evidence="1">Binds 4 [4Fe-4S] clusters.</text>
</comment>
<comment type="subunit">
    <text>Consists of five subunits: an integral membrane subunit, a cytochrome b-like subunit, a cytochrome c subunit and two iron-sulfur subunits.</text>
</comment>
<comment type="subcellular location">
    <subcellularLocation>
        <location>Cell membrane</location>
        <topology>Peripheral membrane protein</topology>
        <orientation>Extracellular side</orientation>
    </subcellularLocation>
</comment>
<comment type="PTM">
    <text>Predicted to be exported by the Tat system. The position of the signal peptide cleavage has been experimentally proven.</text>
</comment>
<dbReference type="EMBL" id="AE000782">
    <property type="protein sequence ID" value="AAB90738.1"/>
    <property type="molecule type" value="Genomic_DNA"/>
</dbReference>
<dbReference type="PIR" id="C69312">
    <property type="entry name" value="C69312"/>
</dbReference>
<dbReference type="RefSeq" id="WP_010878006.1">
    <property type="nucleotide sequence ID" value="NC_000917.1"/>
</dbReference>
<dbReference type="SMR" id="O29751"/>
<dbReference type="STRING" id="224325.AF_0499"/>
<dbReference type="PaxDb" id="224325-AF_0499"/>
<dbReference type="EnsemblBacteria" id="AAB90738">
    <property type="protein sequence ID" value="AAB90738"/>
    <property type="gene ID" value="AF_0499"/>
</dbReference>
<dbReference type="GeneID" id="24794039"/>
<dbReference type="KEGG" id="afu:AF_0499"/>
<dbReference type="eggNOG" id="arCOG01500">
    <property type="taxonomic scope" value="Archaea"/>
</dbReference>
<dbReference type="HOGENOM" id="CLU_043374_1_0_2"/>
<dbReference type="OrthoDB" id="2837at2157"/>
<dbReference type="PhylomeDB" id="O29751"/>
<dbReference type="Proteomes" id="UP000002199">
    <property type="component" value="Chromosome"/>
</dbReference>
<dbReference type="GO" id="GO:0005886">
    <property type="term" value="C:plasma membrane"/>
    <property type="evidence" value="ECO:0007669"/>
    <property type="project" value="UniProtKB-SubCell"/>
</dbReference>
<dbReference type="GO" id="GO:0051539">
    <property type="term" value="F:4 iron, 4 sulfur cluster binding"/>
    <property type="evidence" value="ECO:0007669"/>
    <property type="project" value="UniProtKB-KW"/>
</dbReference>
<dbReference type="GO" id="GO:0046872">
    <property type="term" value="F:metal ion binding"/>
    <property type="evidence" value="ECO:0007669"/>
    <property type="project" value="UniProtKB-KW"/>
</dbReference>
<dbReference type="GO" id="GO:0016491">
    <property type="term" value="F:oxidoreductase activity"/>
    <property type="evidence" value="ECO:0007669"/>
    <property type="project" value="UniProtKB-KW"/>
</dbReference>
<dbReference type="CDD" id="cd10551">
    <property type="entry name" value="PsrB"/>
    <property type="match status" value="1"/>
</dbReference>
<dbReference type="Gene3D" id="3.30.70.20">
    <property type="match status" value="2"/>
</dbReference>
<dbReference type="InterPro" id="IPR017896">
    <property type="entry name" value="4Fe4S_Fe-S-bd"/>
</dbReference>
<dbReference type="InterPro" id="IPR017900">
    <property type="entry name" value="4Fe4S_Fe_S_CS"/>
</dbReference>
<dbReference type="InterPro" id="IPR054822">
    <property type="entry name" value="DsrO-like"/>
</dbReference>
<dbReference type="InterPro" id="IPR050954">
    <property type="entry name" value="ET_IronSulfur_Cluster-Binding"/>
</dbReference>
<dbReference type="InterPro" id="IPR006311">
    <property type="entry name" value="TAT_signal"/>
</dbReference>
<dbReference type="NCBIfam" id="NF045797">
    <property type="entry name" value="DsrO"/>
    <property type="match status" value="1"/>
</dbReference>
<dbReference type="PANTHER" id="PTHR43177">
    <property type="entry name" value="PROTEIN NRFC"/>
    <property type="match status" value="1"/>
</dbReference>
<dbReference type="PANTHER" id="PTHR43177:SF3">
    <property type="entry name" value="PROTEIN NRFC HOMOLOG"/>
    <property type="match status" value="1"/>
</dbReference>
<dbReference type="Pfam" id="PF13247">
    <property type="entry name" value="Fer4_11"/>
    <property type="match status" value="1"/>
</dbReference>
<dbReference type="SUPFAM" id="SSF54862">
    <property type="entry name" value="4Fe-4S ferredoxins"/>
    <property type="match status" value="1"/>
</dbReference>
<dbReference type="PROSITE" id="PS00198">
    <property type="entry name" value="4FE4S_FER_1"/>
    <property type="match status" value="1"/>
</dbReference>
<dbReference type="PROSITE" id="PS51379">
    <property type="entry name" value="4FE4S_FER_2"/>
    <property type="match status" value="1"/>
</dbReference>
<dbReference type="PROSITE" id="PS51318">
    <property type="entry name" value="TAT"/>
    <property type="match status" value="1"/>
</dbReference>
<organism>
    <name type="scientific">Archaeoglobus fulgidus (strain ATCC 49558 / DSM 4304 / JCM 9628 / NBRC 100126 / VC-16)</name>
    <dbReference type="NCBI Taxonomy" id="224325"/>
    <lineage>
        <taxon>Archaea</taxon>
        <taxon>Methanobacteriati</taxon>
        <taxon>Methanobacteriota</taxon>
        <taxon>Archaeoglobi</taxon>
        <taxon>Archaeoglobales</taxon>
        <taxon>Archaeoglobaceae</taxon>
        <taxon>Archaeoglobus</taxon>
    </lineage>
</organism>
<accession>O29751</accession>